<evidence type="ECO:0000250" key="1"/>
<evidence type="ECO:0000255" key="2">
    <source>
        <dbReference type="PROSITE-ProRule" id="PRU00649"/>
    </source>
</evidence>
<evidence type="ECO:0000256" key="3">
    <source>
        <dbReference type="SAM" id="MobiDB-lite"/>
    </source>
</evidence>
<evidence type="ECO:0000269" key="4">
    <source>
    </source>
</evidence>
<evidence type="ECO:0000269" key="5">
    <source>
    </source>
</evidence>
<evidence type="ECO:0000305" key="6"/>
<proteinExistence type="evidence at protein level"/>
<comment type="function">
    <text evidence="1 4">Component of the Mediator complex, a coactivator involved in the regulated transcription of nearly all RNA polymerase II-dependent genes. Mediator functions as a bridge to convey information from gene-specific regulatory proteins to the basal RNA polymerase II transcription machinery. Mediator is recruited to promoters by direct interactions with regulatory proteins and serves as a scaffold for the assembly of a functional preinitiation complex with RNA polymerase II and the general transcription factors (By similarity). Required for activated transcription of the MtnA gene.</text>
</comment>
<comment type="subunit">
    <text evidence="1">Component of the Mediator complex (By similarity). Interacts with MED6 and MED17.</text>
</comment>
<comment type="subcellular location">
    <subcellularLocation>
        <location evidence="6">Nucleus</location>
    </subcellularLocation>
</comment>
<comment type="similarity">
    <text evidence="6">Belongs to the Mediator complex subunit 26 family.</text>
</comment>
<comment type="sequence caution" evidence="6">
    <conflict type="erroneous initiation">
        <sequence resource="EMBL-CDS" id="AAM11139"/>
    </conflict>
</comment>
<comment type="sequence caution" evidence="6">
    <conflict type="erroneous termination">
        <sequence resource="EMBL-CDS" id="AAO39538"/>
    </conflict>
    <text>Truncated C-terminus.</text>
</comment>
<sequence>MNQIEIQELTTHLSQALDQNYDVVNMDAVLCVICALEGTTITKEQLEATRLAKYINQLRRRTKNEHLARRAKSLLKKWREMVGIQQTATENLAHPSQISSSQPALDLVKSPITSFITEPIAPSQQIVSDLHSNIDSAEPPLSGEHTLLHPNFSNLVNSIKDSDRHENIAITTLHTHKDRRHSHSIRSCHVASPQPIVIDHSVNSVINLTDDSTVKINEASVVIDIASDSDENDNNGSLNPKKLNSIVPAPLPIPSTPSSRQRKLKKEKRSKEREGQVATNTRFGAKASDGFQQAALTTDSEIFSLSNSSMSSIVSGDATSSYSQNKSRLNSNELTFTGRFKAVDHLFRSTESGKHKIDEYSAYDSNASCSRLSPSTVDEVKKAEHLFDAQLTNTTANQIPMSAVSIGYESNTRHEYLESDSPSQIPKRRGRKKGSKGVDALIAKESSSLSQQIFFGGSTVKKVKTTKELFNEIQSRKLSVSMQSSASNLSNSSTNRDLPSHTTFPRQTSSCSDTSMNSPHILETLSGSAIFASKIDDLGNTDSDTVTSDPSHDSNKSQEIKECTSLDSNSNSIQSLPLANNRENLIPTNVNDITTQLMHLIHSLNSPLSEIEIERVYQEKIIPCTCIVIEGVQGTLGESNNSTLDEQSYNAKISLNSKDNLSCHNQDNYSTSQRSVNGEVIDTQPKLVKSIFDLDFDDNDDPLYFIMDEIQKPIARADELKNNKSDTKNINFGASAQNASLNIIHFNDDAQQDNSNQERGKNETQNAIPAFTVHEDPDCLARQRFYIQTNKVTSFHINALHNYYIPNINGNWDSVESFTSFQSEHTIMDTMESYTVTNGADVVPKYGLLTSDRIRKDLSSLKSIKPYRVKNFTSLISPFLGVAKCLPTCRRARRRFKNFVNSSTANDKISNNFESLENMKTSFKNCNPLNVKIDGTTSAIYSHNENHVPMQVNTNVEQLPPSQSFSSNAISYNLLKLADDKVCHDGISDKSSNTGCQGNSPYSSSSSSSYSGRKEDQHIITKNLQNKNIQLNSRKSDMKRRKRIYLENDSKKKKHYRKRIKTAVNRTFSNLHRNLYSIDSENGMKNDYKNEYGNSNNEEYAIVQRPAGDGENCSNHIVLTIKKTPSKINSPANSMTAFSPPSTSDGANLQKSILDLRLEDTNISQSITEIPQKKDLSKTDRIVHQSRSSAYRRIFRKPDKSQTKFIDLDLKHLFHLKANSPCISANAKLHNKLFFPHELSRDNTSGIRERLINYSSSSSSSYDDDSEVENTSFLKKANVNKFSASNNRNLKTETETCAATAISEFKFESDEDSILTSLGDSDIDIQDEIQVINDKVDYCNDFQNNKMLESFNSIFVDSLRTNTKNASDNMGSSAHITSLESLKPENADAITRYCNNNNLGVNLSNELSNISAKPLKSFDSTMKLPSLGIEHCTGIKTSSDMASTNIAEKKLTRIQQFKEWHQVLQLRSYNNEPLIVLPYVLLE</sequence>
<reference key="1">
    <citation type="journal article" date="2000" name="Science">
        <title>The genome sequence of Drosophila melanogaster.</title>
        <authorList>
            <person name="Adams M.D."/>
            <person name="Celniker S.E."/>
            <person name="Holt R.A."/>
            <person name="Evans C.A."/>
            <person name="Gocayne J.D."/>
            <person name="Amanatides P.G."/>
            <person name="Scherer S.E."/>
            <person name="Li P.W."/>
            <person name="Hoskins R.A."/>
            <person name="Galle R.F."/>
            <person name="George R.A."/>
            <person name="Lewis S.E."/>
            <person name="Richards S."/>
            <person name="Ashburner M."/>
            <person name="Henderson S.N."/>
            <person name="Sutton G.G."/>
            <person name="Wortman J.R."/>
            <person name="Yandell M.D."/>
            <person name="Zhang Q."/>
            <person name="Chen L.X."/>
            <person name="Brandon R.C."/>
            <person name="Rogers Y.-H.C."/>
            <person name="Blazej R.G."/>
            <person name="Champe M."/>
            <person name="Pfeiffer B.D."/>
            <person name="Wan K.H."/>
            <person name="Doyle C."/>
            <person name="Baxter E.G."/>
            <person name="Helt G."/>
            <person name="Nelson C.R."/>
            <person name="Miklos G.L.G."/>
            <person name="Abril J.F."/>
            <person name="Agbayani A."/>
            <person name="An H.-J."/>
            <person name="Andrews-Pfannkoch C."/>
            <person name="Baldwin D."/>
            <person name="Ballew R.M."/>
            <person name="Basu A."/>
            <person name="Baxendale J."/>
            <person name="Bayraktaroglu L."/>
            <person name="Beasley E.M."/>
            <person name="Beeson K.Y."/>
            <person name="Benos P.V."/>
            <person name="Berman B.P."/>
            <person name="Bhandari D."/>
            <person name="Bolshakov S."/>
            <person name="Borkova D."/>
            <person name="Botchan M.R."/>
            <person name="Bouck J."/>
            <person name="Brokstein P."/>
            <person name="Brottier P."/>
            <person name="Burtis K.C."/>
            <person name="Busam D.A."/>
            <person name="Butler H."/>
            <person name="Cadieu E."/>
            <person name="Center A."/>
            <person name="Chandra I."/>
            <person name="Cherry J.M."/>
            <person name="Cawley S."/>
            <person name="Dahlke C."/>
            <person name="Davenport L.B."/>
            <person name="Davies P."/>
            <person name="de Pablos B."/>
            <person name="Delcher A."/>
            <person name="Deng Z."/>
            <person name="Mays A.D."/>
            <person name="Dew I."/>
            <person name="Dietz S.M."/>
            <person name="Dodson K."/>
            <person name="Doup L.E."/>
            <person name="Downes M."/>
            <person name="Dugan-Rocha S."/>
            <person name="Dunkov B.C."/>
            <person name="Dunn P."/>
            <person name="Durbin K.J."/>
            <person name="Evangelista C.C."/>
            <person name="Ferraz C."/>
            <person name="Ferriera S."/>
            <person name="Fleischmann W."/>
            <person name="Fosler C."/>
            <person name="Gabrielian A.E."/>
            <person name="Garg N.S."/>
            <person name="Gelbart W.M."/>
            <person name="Glasser K."/>
            <person name="Glodek A."/>
            <person name="Gong F."/>
            <person name="Gorrell J.H."/>
            <person name="Gu Z."/>
            <person name="Guan P."/>
            <person name="Harris M."/>
            <person name="Harris N.L."/>
            <person name="Harvey D.A."/>
            <person name="Heiman T.J."/>
            <person name="Hernandez J.R."/>
            <person name="Houck J."/>
            <person name="Hostin D."/>
            <person name="Houston K.A."/>
            <person name="Howland T.J."/>
            <person name="Wei M.-H."/>
            <person name="Ibegwam C."/>
            <person name="Jalali M."/>
            <person name="Kalush F."/>
            <person name="Karpen G.H."/>
            <person name="Ke Z."/>
            <person name="Kennison J.A."/>
            <person name="Ketchum K.A."/>
            <person name="Kimmel B.E."/>
            <person name="Kodira C.D."/>
            <person name="Kraft C.L."/>
            <person name="Kravitz S."/>
            <person name="Kulp D."/>
            <person name="Lai Z."/>
            <person name="Lasko P."/>
            <person name="Lei Y."/>
            <person name="Levitsky A.A."/>
            <person name="Li J.H."/>
            <person name="Li Z."/>
            <person name="Liang Y."/>
            <person name="Lin X."/>
            <person name="Liu X."/>
            <person name="Mattei B."/>
            <person name="McIntosh T.C."/>
            <person name="McLeod M.P."/>
            <person name="McPherson D."/>
            <person name="Merkulov G."/>
            <person name="Milshina N.V."/>
            <person name="Mobarry C."/>
            <person name="Morris J."/>
            <person name="Moshrefi A."/>
            <person name="Mount S.M."/>
            <person name="Moy M."/>
            <person name="Murphy B."/>
            <person name="Murphy L."/>
            <person name="Muzny D.M."/>
            <person name="Nelson D.L."/>
            <person name="Nelson D.R."/>
            <person name="Nelson K.A."/>
            <person name="Nixon K."/>
            <person name="Nusskern D.R."/>
            <person name="Pacleb J.M."/>
            <person name="Palazzolo M."/>
            <person name="Pittman G.S."/>
            <person name="Pan S."/>
            <person name="Pollard J."/>
            <person name="Puri V."/>
            <person name="Reese M.G."/>
            <person name="Reinert K."/>
            <person name="Remington K."/>
            <person name="Saunders R.D.C."/>
            <person name="Scheeler F."/>
            <person name="Shen H."/>
            <person name="Shue B.C."/>
            <person name="Siden-Kiamos I."/>
            <person name="Simpson M."/>
            <person name="Skupski M.P."/>
            <person name="Smith T.J."/>
            <person name="Spier E."/>
            <person name="Spradling A.C."/>
            <person name="Stapleton M."/>
            <person name="Strong R."/>
            <person name="Sun E."/>
            <person name="Svirskas R."/>
            <person name="Tector C."/>
            <person name="Turner R."/>
            <person name="Venter E."/>
            <person name="Wang A.H."/>
            <person name="Wang X."/>
            <person name="Wang Z.-Y."/>
            <person name="Wassarman D.A."/>
            <person name="Weinstock G.M."/>
            <person name="Weissenbach J."/>
            <person name="Williams S.M."/>
            <person name="Woodage T."/>
            <person name="Worley K.C."/>
            <person name="Wu D."/>
            <person name="Yang S."/>
            <person name="Yao Q.A."/>
            <person name="Ye J."/>
            <person name="Yeh R.-F."/>
            <person name="Zaveri J.S."/>
            <person name="Zhan M."/>
            <person name="Zhang G."/>
            <person name="Zhao Q."/>
            <person name="Zheng L."/>
            <person name="Zheng X.H."/>
            <person name="Zhong F.N."/>
            <person name="Zhong W."/>
            <person name="Zhou X."/>
            <person name="Zhu S.C."/>
            <person name="Zhu X."/>
            <person name="Smith H.O."/>
            <person name="Gibbs R.A."/>
            <person name="Myers E.W."/>
            <person name="Rubin G.M."/>
            <person name="Venter J.C."/>
        </authorList>
    </citation>
    <scope>NUCLEOTIDE SEQUENCE [LARGE SCALE GENOMIC DNA]</scope>
    <source>
        <strain>Berkeley</strain>
    </source>
</reference>
<reference key="2">
    <citation type="journal article" date="2002" name="Genome Biol.">
        <title>Annotation of the Drosophila melanogaster euchromatic genome: a systematic review.</title>
        <authorList>
            <person name="Misra S."/>
            <person name="Crosby M.A."/>
            <person name="Mungall C.J."/>
            <person name="Matthews B.B."/>
            <person name="Campbell K.S."/>
            <person name="Hradecky P."/>
            <person name="Huang Y."/>
            <person name="Kaminker J.S."/>
            <person name="Millburn G.H."/>
            <person name="Prochnik S.E."/>
            <person name="Smith C.D."/>
            <person name="Tupy J.L."/>
            <person name="Whitfield E.J."/>
            <person name="Bayraktaroglu L."/>
            <person name="Berman B.P."/>
            <person name="Bettencourt B.R."/>
            <person name="Celniker S.E."/>
            <person name="de Grey A.D.N.J."/>
            <person name="Drysdale R.A."/>
            <person name="Harris N.L."/>
            <person name="Richter J."/>
            <person name="Russo S."/>
            <person name="Schroeder A.J."/>
            <person name="Shu S.Q."/>
            <person name="Stapleton M."/>
            <person name="Yamada C."/>
            <person name="Ashburner M."/>
            <person name="Gelbart W.M."/>
            <person name="Rubin G.M."/>
            <person name="Lewis S.E."/>
        </authorList>
    </citation>
    <scope>GENOME REANNOTATION</scope>
    <source>
        <strain>Berkeley</strain>
    </source>
</reference>
<reference key="3">
    <citation type="submission" date="2004-08" db="EMBL/GenBank/DDBJ databases">
        <authorList>
            <person name="Stapleton M."/>
            <person name="Brokstein P."/>
            <person name="Hong L."/>
            <person name="Agbayani A."/>
            <person name="Carlson J.W."/>
            <person name="Champe M."/>
            <person name="Chavez C."/>
            <person name="Dorsett V."/>
            <person name="Dresnek D."/>
            <person name="Farfan D."/>
            <person name="Frise E."/>
            <person name="George R.A."/>
            <person name="Gonzalez M."/>
            <person name="Guarin H."/>
            <person name="Kronmiller B."/>
            <person name="Li P.W."/>
            <person name="Liao G."/>
            <person name="Miranda A."/>
            <person name="Mungall C.J."/>
            <person name="Nunoo J."/>
            <person name="Pacleb J.M."/>
            <person name="Paragas V."/>
            <person name="Park S."/>
            <person name="Patel S."/>
            <person name="Phouanenavong S."/>
            <person name="Wan K.H."/>
            <person name="Yu C."/>
            <person name="Lewis S.E."/>
            <person name="Rubin G.M."/>
            <person name="Celniker S.E."/>
        </authorList>
    </citation>
    <scope>NUCLEOTIDE SEQUENCE [LARGE SCALE MRNA]</scope>
    <source>
        <strain>Berkeley</strain>
        <tissue>Embryo</tissue>
    </source>
</reference>
<reference key="4">
    <citation type="journal article" date="2002" name="Genome Biol.">
        <title>A Drosophila full-length cDNA resource.</title>
        <authorList>
            <person name="Stapleton M."/>
            <person name="Carlson J.W."/>
            <person name="Brokstein P."/>
            <person name="Yu C."/>
            <person name="Champe M."/>
            <person name="George R.A."/>
            <person name="Guarin H."/>
            <person name="Kronmiller B."/>
            <person name="Pacleb J.M."/>
            <person name="Park S."/>
            <person name="Wan K.H."/>
            <person name="Rubin G.M."/>
            <person name="Celniker S.E."/>
        </authorList>
    </citation>
    <scope>NUCLEOTIDE SEQUENCE [LARGE SCALE MRNA] OF 680-1483</scope>
    <source>
        <strain>Berkeley</strain>
        <tissue>Embryo</tissue>
    </source>
</reference>
<reference key="5">
    <citation type="journal article" date="2006" name="Genes Dev.">
        <title>Coactivator cross-talk specifies transcriptional output.</title>
        <authorList>
            <person name="Marr M.T. II"/>
            <person name="Isogai Y."/>
            <person name="Wright K.J."/>
            <person name="Tjian R."/>
        </authorList>
    </citation>
    <scope>FUNCTION</scope>
</reference>
<reference key="6">
    <citation type="journal article" date="2008" name="J. Proteome Res.">
        <title>Phosphoproteome analysis of Drosophila melanogaster embryos.</title>
        <authorList>
            <person name="Zhai B."/>
            <person name="Villen J."/>
            <person name="Beausoleil S.A."/>
            <person name="Mintseris J."/>
            <person name="Gygi S.P."/>
        </authorList>
    </citation>
    <scope>PHOSPHORYLATION [LARGE SCALE ANALYSIS] AT SER-204; SER-258; SER-421; THR-541; SER-551; SER-1177 AND THR-1179</scope>
    <scope>IDENTIFICATION BY MASS SPECTROMETRY</scope>
    <source>
        <tissue>Embryo</tissue>
    </source>
</reference>
<dbReference type="EMBL" id="AE014135">
    <property type="protein sequence ID" value="AAF59314.2"/>
    <property type="molecule type" value="Genomic_DNA"/>
</dbReference>
<dbReference type="EMBL" id="AE014135">
    <property type="protein sequence ID" value="AAF59315.2"/>
    <property type="molecule type" value="Genomic_DNA"/>
</dbReference>
<dbReference type="EMBL" id="BT003534">
    <property type="protein sequence ID" value="AAO39538.1"/>
    <property type="status" value="ALT_SEQ"/>
    <property type="molecule type" value="mRNA"/>
</dbReference>
<dbReference type="EMBL" id="BT015280">
    <property type="protein sequence ID" value="AAT94509.1"/>
    <property type="status" value="ALT_TERM"/>
    <property type="molecule type" value="mRNA"/>
</dbReference>
<dbReference type="EMBL" id="AY094786">
    <property type="protein sequence ID" value="AAM11139.1"/>
    <property type="status" value="ALT_INIT"/>
    <property type="molecule type" value="mRNA"/>
</dbReference>
<dbReference type="RefSeq" id="NP_651936.1">
    <property type="nucleotide sequence ID" value="NM_143679.4"/>
</dbReference>
<dbReference type="RefSeq" id="NP_726610.1">
    <property type="nucleotide sequence ID" value="NM_166791.2"/>
</dbReference>
<dbReference type="SMR" id="Q9V4F9"/>
<dbReference type="BioGRID" id="68645">
    <property type="interactions" value="14"/>
</dbReference>
<dbReference type="ComplexPortal" id="CPX-2308">
    <property type="entry name" value="Core mediator complex"/>
</dbReference>
<dbReference type="FunCoup" id="Q9V4F9">
    <property type="interactions" value="92"/>
</dbReference>
<dbReference type="IntAct" id="Q9V4F9">
    <property type="interactions" value="5"/>
</dbReference>
<dbReference type="STRING" id="7227.FBpp0088314"/>
<dbReference type="GlyGen" id="Q9V4F9">
    <property type="glycosylation" value="1 site"/>
</dbReference>
<dbReference type="iPTMnet" id="Q9V4F9"/>
<dbReference type="PaxDb" id="7227-FBpp0088313"/>
<dbReference type="EnsemblMetazoa" id="FBtr0089253">
    <property type="protein sequence ID" value="FBpp0088313"/>
    <property type="gene ID" value="FBgn0039923"/>
</dbReference>
<dbReference type="EnsemblMetazoa" id="FBtr0089254">
    <property type="protein sequence ID" value="FBpp0088314"/>
    <property type="gene ID" value="FBgn0039923"/>
</dbReference>
<dbReference type="GeneID" id="43816"/>
<dbReference type="KEGG" id="dme:Dmel_CG1793"/>
<dbReference type="AGR" id="FB:FBgn0039923"/>
<dbReference type="CTD" id="9441"/>
<dbReference type="FlyBase" id="FBgn0039923">
    <property type="gene designation" value="MED26"/>
</dbReference>
<dbReference type="VEuPathDB" id="VectorBase:FBgn0039923"/>
<dbReference type="eggNOG" id="ENOG502S9CY">
    <property type="taxonomic scope" value="Eukaryota"/>
</dbReference>
<dbReference type="GeneTree" id="ENSGT00390000000259"/>
<dbReference type="HOGENOM" id="CLU_249548_0_0_1"/>
<dbReference type="InParanoid" id="Q9V4F9"/>
<dbReference type="OMA" id="NALHNFY"/>
<dbReference type="OrthoDB" id="550309at2759"/>
<dbReference type="PhylomeDB" id="Q9V4F9"/>
<dbReference type="SignaLink" id="Q9V4F9"/>
<dbReference type="BioGRID-ORCS" id="43816">
    <property type="hits" value="0 hits in 1 CRISPR screen"/>
</dbReference>
<dbReference type="ChiTaRS" id="MED26">
    <property type="organism name" value="fly"/>
</dbReference>
<dbReference type="GenomeRNAi" id="43816"/>
<dbReference type="PRO" id="PR:Q9V4F9"/>
<dbReference type="Proteomes" id="UP000000803">
    <property type="component" value="Chromosome 4"/>
</dbReference>
<dbReference type="Bgee" id="FBgn0039923">
    <property type="expression patterns" value="Expressed in spermatocyte in testis and 296 other cell types or tissues"/>
</dbReference>
<dbReference type="GO" id="GO:0000785">
    <property type="term" value="C:chromatin"/>
    <property type="evidence" value="ECO:0000314"/>
    <property type="project" value="FlyBase"/>
</dbReference>
<dbReference type="GO" id="GO:0070847">
    <property type="term" value="C:core mediator complex"/>
    <property type="evidence" value="ECO:0000353"/>
    <property type="project" value="FlyBase"/>
</dbReference>
<dbReference type="GO" id="GO:0016592">
    <property type="term" value="C:mediator complex"/>
    <property type="evidence" value="ECO:0000250"/>
    <property type="project" value="UniProtKB"/>
</dbReference>
<dbReference type="GO" id="GO:0005730">
    <property type="term" value="C:nucleolus"/>
    <property type="evidence" value="ECO:0000314"/>
    <property type="project" value="FlyBase"/>
</dbReference>
<dbReference type="GO" id="GO:0005721">
    <property type="term" value="C:pericentric heterochromatin"/>
    <property type="evidence" value="ECO:0000353"/>
    <property type="project" value="FlyBase"/>
</dbReference>
<dbReference type="GO" id="GO:0005701">
    <property type="term" value="C:polytene chromosome chromocenter"/>
    <property type="evidence" value="ECO:0000314"/>
    <property type="project" value="FlyBase"/>
</dbReference>
<dbReference type="GO" id="GO:0003712">
    <property type="term" value="F:transcription coregulator activity"/>
    <property type="evidence" value="ECO:0000250"/>
    <property type="project" value="UniProtKB"/>
</dbReference>
<dbReference type="GO" id="GO:0010628">
    <property type="term" value="P:positive regulation of gene expression"/>
    <property type="evidence" value="ECO:0000315"/>
    <property type="project" value="FlyBase"/>
</dbReference>
<dbReference type="GO" id="GO:0006357">
    <property type="term" value="P:regulation of transcription by RNA polymerase II"/>
    <property type="evidence" value="ECO:0000315"/>
    <property type="project" value="UniProtKB"/>
</dbReference>
<dbReference type="Gene3D" id="1.20.930.10">
    <property type="entry name" value="Conserved domain common to transcription factors TFIIS, elongin A, CRSP70"/>
    <property type="match status" value="1"/>
</dbReference>
<dbReference type="InterPro" id="IPR042376">
    <property type="entry name" value="MED26"/>
</dbReference>
<dbReference type="InterPro" id="IPR003617">
    <property type="entry name" value="TFIIS/CRSP70_N_sub"/>
</dbReference>
<dbReference type="InterPro" id="IPR035441">
    <property type="entry name" value="TFIIS/LEDGF_dom_sf"/>
</dbReference>
<dbReference type="InterPro" id="IPR017923">
    <property type="entry name" value="TFIIS_N"/>
</dbReference>
<dbReference type="PANTHER" id="PTHR15201">
    <property type="entry name" value="CRSP70"/>
    <property type="match status" value="1"/>
</dbReference>
<dbReference type="PANTHER" id="PTHR15201:SF1">
    <property type="entry name" value="MEDIATOR OF RNA POLYMERASE II TRANSCRIPTION SUBUNIT 26"/>
    <property type="match status" value="1"/>
</dbReference>
<dbReference type="Pfam" id="PF08711">
    <property type="entry name" value="Med26"/>
    <property type="match status" value="1"/>
</dbReference>
<dbReference type="SMART" id="SM00509">
    <property type="entry name" value="TFS2N"/>
    <property type="match status" value="1"/>
</dbReference>
<dbReference type="SUPFAM" id="SSF47676">
    <property type="entry name" value="Conserved domain common to transcription factors TFIIS, elongin A, CRSP70"/>
    <property type="match status" value="1"/>
</dbReference>
<dbReference type="PROSITE" id="PS51319">
    <property type="entry name" value="TFIIS_N"/>
    <property type="match status" value="1"/>
</dbReference>
<organism>
    <name type="scientific">Drosophila melanogaster</name>
    <name type="common">Fruit fly</name>
    <dbReference type="NCBI Taxonomy" id="7227"/>
    <lineage>
        <taxon>Eukaryota</taxon>
        <taxon>Metazoa</taxon>
        <taxon>Ecdysozoa</taxon>
        <taxon>Arthropoda</taxon>
        <taxon>Hexapoda</taxon>
        <taxon>Insecta</taxon>
        <taxon>Pterygota</taxon>
        <taxon>Neoptera</taxon>
        <taxon>Endopterygota</taxon>
        <taxon>Diptera</taxon>
        <taxon>Brachycera</taxon>
        <taxon>Muscomorpha</taxon>
        <taxon>Ephydroidea</taxon>
        <taxon>Drosophilidae</taxon>
        <taxon>Drosophila</taxon>
        <taxon>Sophophora</taxon>
    </lineage>
</organism>
<gene>
    <name type="primary">MED26</name>
    <name type="synonym">Arc70</name>
    <name type="ORF">CG1793</name>
    <name type="ORF">CG1823</name>
</gene>
<feature type="chain" id="PRO_0000304962" description="Mediator of RNA polymerase II transcription subunit 26">
    <location>
        <begin position="1"/>
        <end position="1483"/>
    </location>
</feature>
<feature type="domain" description="TFIIS N-terminal" evidence="2">
    <location>
        <begin position="8"/>
        <end position="85"/>
    </location>
</feature>
<feature type="region of interest" description="Disordered" evidence="3">
    <location>
        <begin position="227"/>
        <end position="278"/>
    </location>
</feature>
<feature type="region of interest" description="Disordered" evidence="3">
    <location>
        <begin position="414"/>
        <end position="438"/>
    </location>
</feature>
<feature type="region of interest" description="Disordered" evidence="3">
    <location>
        <begin position="480"/>
        <end position="518"/>
    </location>
</feature>
<feature type="region of interest" description="Disordered" evidence="3">
    <location>
        <begin position="541"/>
        <end position="575"/>
    </location>
</feature>
<feature type="region of interest" description="Disordered" evidence="3">
    <location>
        <begin position="989"/>
        <end position="1041"/>
    </location>
</feature>
<feature type="compositionally biased region" description="Basic residues" evidence="3">
    <location>
        <begin position="426"/>
        <end position="435"/>
    </location>
</feature>
<feature type="compositionally biased region" description="Low complexity" evidence="3">
    <location>
        <begin position="480"/>
        <end position="495"/>
    </location>
</feature>
<feature type="compositionally biased region" description="Polar residues" evidence="3">
    <location>
        <begin position="496"/>
        <end position="518"/>
    </location>
</feature>
<feature type="compositionally biased region" description="Basic and acidic residues" evidence="3">
    <location>
        <begin position="550"/>
        <end position="564"/>
    </location>
</feature>
<feature type="compositionally biased region" description="Polar residues" evidence="3">
    <location>
        <begin position="565"/>
        <end position="575"/>
    </location>
</feature>
<feature type="compositionally biased region" description="Polar residues" evidence="3">
    <location>
        <begin position="989"/>
        <end position="999"/>
    </location>
</feature>
<feature type="compositionally biased region" description="Low complexity" evidence="3">
    <location>
        <begin position="1000"/>
        <end position="1011"/>
    </location>
</feature>
<feature type="compositionally biased region" description="Polar residues" evidence="3">
    <location>
        <begin position="1020"/>
        <end position="1033"/>
    </location>
</feature>
<feature type="modified residue" description="Phosphoserine" evidence="5">
    <location>
        <position position="204"/>
    </location>
</feature>
<feature type="modified residue" description="Phosphoserine" evidence="5">
    <location>
        <position position="258"/>
    </location>
</feature>
<feature type="modified residue" description="Phosphoserine" evidence="5">
    <location>
        <position position="421"/>
    </location>
</feature>
<feature type="modified residue" description="Phosphothreonine" evidence="5">
    <location>
        <position position="541"/>
    </location>
</feature>
<feature type="modified residue" description="Phosphoserine" evidence="5">
    <location>
        <position position="551"/>
    </location>
</feature>
<feature type="modified residue" description="Phosphoserine" evidence="5">
    <location>
        <position position="1177"/>
    </location>
</feature>
<feature type="modified residue" description="Phosphothreonine" evidence="5">
    <location>
        <position position="1179"/>
    </location>
</feature>
<feature type="sequence conflict" description="In Ref. 3; AAO39538." evidence="6" ref="3">
    <original>L</original>
    <variation>V</variation>
    <location>
        <position position="597"/>
    </location>
</feature>
<keyword id="KW-0010">Activator</keyword>
<keyword id="KW-0539">Nucleus</keyword>
<keyword id="KW-0597">Phosphoprotein</keyword>
<keyword id="KW-1185">Reference proteome</keyword>
<keyword id="KW-0804">Transcription</keyword>
<keyword id="KW-0805">Transcription regulation</keyword>
<protein>
    <recommendedName>
        <fullName>Mediator of RNA polymerase II transcription subunit 26</fullName>
    </recommendedName>
    <alternativeName>
        <fullName>Mediator complex subunit 26</fullName>
    </alternativeName>
    <alternativeName>
        <fullName>dARC70</fullName>
    </alternativeName>
</protein>
<name>MED26_DROME</name>
<accession>Q9V4F9</accession>
<accession>Q6AWG8</accession>
<accession>Q86P16</accession>
<accession>Q8SX84</accession>